<organism>
    <name type="scientific">Rattus norvegicus</name>
    <name type="common">Rat</name>
    <dbReference type="NCBI Taxonomy" id="10116"/>
    <lineage>
        <taxon>Eukaryota</taxon>
        <taxon>Metazoa</taxon>
        <taxon>Chordata</taxon>
        <taxon>Craniata</taxon>
        <taxon>Vertebrata</taxon>
        <taxon>Euteleostomi</taxon>
        <taxon>Mammalia</taxon>
        <taxon>Eutheria</taxon>
        <taxon>Euarchontoglires</taxon>
        <taxon>Glires</taxon>
        <taxon>Rodentia</taxon>
        <taxon>Myomorpha</taxon>
        <taxon>Muroidea</taxon>
        <taxon>Muridae</taxon>
        <taxon>Murinae</taxon>
        <taxon>Rattus</taxon>
    </lineage>
</organism>
<dbReference type="EMBL" id="M20156">
    <property type="protein sequence ID" value="AAA42070.1"/>
    <property type="molecule type" value="mRNA"/>
</dbReference>
<dbReference type="EMBL" id="BC084727">
    <property type="protein sequence ID" value="AAH84727.1"/>
    <property type="molecule type" value="mRNA"/>
</dbReference>
<dbReference type="PIR" id="A29906">
    <property type="entry name" value="R5RT81"/>
</dbReference>
<dbReference type="RefSeq" id="NP_112364.1">
    <property type="nucleotide sequence ID" value="NM_031102.2"/>
</dbReference>
<dbReference type="PDB" id="7QGG">
    <property type="method" value="EM"/>
    <property type="resolution" value="2.86 A"/>
    <property type="chains" value="R=1-188"/>
</dbReference>
<dbReference type="PDBsum" id="7QGG"/>
<dbReference type="EMDB" id="EMD-13954"/>
<dbReference type="SMR" id="P12001"/>
<dbReference type="BioGRID" id="249638">
    <property type="interactions" value="5"/>
</dbReference>
<dbReference type="FunCoup" id="P12001">
    <property type="interactions" value="2286"/>
</dbReference>
<dbReference type="IntAct" id="P12001">
    <property type="interactions" value="8"/>
</dbReference>
<dbReference type="STRING" id="10116.ENSRNOP00000028555"/>
<dbReference type="iPTMnet" id="P12001"/>
<dbReference type="PhosphoSitePlus" id="P12001"/>
<dbReference type="jPOST" id="P12001"/>
<dbReference type="PaxDb" id="10116-ENSRNOP00000028555"/>
<dbReference type="Ensembl" id="ENSRNOT00000103343.1">
    <property type="protein sequence ID" value="ENSRNOP00000096539.1"/>
    <property type="gene ID" value="ENSRNOG00000021035.7"/>
</dbReference>
<dbReference type="GeneID" id="81766"/>
<dbReference type="KEGG" id="rno:81766"/>
<dbReference type="UCSC" id="RGD:621182">
    <property type="organism name" value="rat"/>
</dbReference>
<dbReference type="AGR" id="RGD:621182"/>
<dbReference type="CTD" id="6141"/>
<dbReference type="RGD" id="621182">
    <property type="gene designation" value="Rpl18"/>
</dbReference>
<dbReference type="eggNOG" id="KOG1714">
    <property type="taxonomic scope" value="Eukaryota"/>
</dbReference>
<dbReference type="GeneTree" id="ENSGT00390000012976"/>
<dbReference type="HOGENOM" id="CLU_080024_0_0_1"/>
<dbReference type="InParanoid" id="P12001"/>
<dbReference type="OrthoDB" id="6353017at2759"/>
<dbReference type="PhylomeDB" id="P12001"/>
<dbReference type="TreeFam" id="TF300202"/>
<dbReference type="Reactome" id="R-RNO-156827">
    <property type="pathway name" value="L13a-mediated translational silencing of Ceruloplasmin expression"/>
</dbReference>
<dbReference type="Reactome" id="R-RNO-1799339">
    <property type="pathway name" value="SRP-dependent cotranslational protein targeting to membrane"/>
</dbReference>
<dbReference type="Reactome" id="R-RNO-6791226">
    <property type="pathway name" value="Major pathway of rRNA processing in the nucleolus and cytosol"/>
</dbReference>
<dbReference type="Reactome" id="R-RNO-72689">
    <property type="pathway name" value="Formation of a pool of free 40S subunits"/>
</dbReference>
<dbReference type="Reactome" id="R-RNO-72706">
    <property type="pathway name" value="GTP hydrolysis and joining of the 60S ribosomal subunit"/>
</dbReference>
<dbReference type="Reactome" id="R-RNO-975956">
    <property type="pathway name" value="Nonsense Mediated Decay (NMD) independent of the Exon Junction Complex (EJC)"/>
</dbReference>
<dbReference type="Reactome" id="R-RNO-975957">
    <property type="pathway name" value="Nonsense Mediated Decay (NMD) enhanced by the Exon Junction Complex (EJC)"/>
</dbReference>
<dbReference type="PRO" id="PR:P12001"/>
<dbReference type="Proteomes" id="UP000002494">
    <property type="component" value="Chromosome 1"/>
</dbReference>
<dbReference type="GO" id="GO:0005737">
    <property type="term" value="C:cytoplasm"/>
    <property type="evidence" value="ECO:0000266"/>
    <property type="project" value="RGD"/>
</dbReference>
<dbReference type="GO" id="GO:0022625">
    <property type="term" value="C:cytosolic large ribosomal subunit"/>
    <property type="evidence" value="ECO:0000314"/>
    <property type="project" value="RGD"/>
</dbReference>
<dbReference type="GO" id="GO:0022626">
    <property type="term" value="C:cytosolic ribosome"/>
    <property type="evidence" value="ECO:0000266"/>
    <property type="project" value="RGD"/>
</dbReference>
<dbReference type="GO" id="GO:0098794">
    <property type="term" value="C:postsynapse"/>
    <property type="evidence" value="ECO:0000303"/>
    <property type="project" value="SynGO"/>
</dbReference>
<dbReference type="GO" id="GO:0098793">
    <property type="term" value="C:presynapse"/>
    <property type="evidence" value="ECO:0000303"/>
    <property type="project" value="SynGO"/>
</dbReference>
<dbReference type="GO" id="GO:0005840">
    <property type="term" value="C:ribosome"/>
    <property type="evidence" value="ECO:0000303"/>
    <property type="project" value="SynGO"/>
</dbReference>
<dbReference type="GO" id="GO:0005791">
    <property type="term" value="C:rough endoplasmic reticulum"/>
    <property type="evidence" value="ECO:0007669"/>
    <property type="project" value="UniProtKB-SubCell"/>
</dbReference>
<dbReference type="GO" id="GO:0045202">
    <property type="term" value="C:synapse"/>
    <property type="evidence" value="ECO:0000314"/>
    <property type="project" value="SynGO"/>
</dbReference>
<dbReference type="GO" id="GO:0003723">
    <property type="term" value="F:RNA binding"/>
    <property type="evidence" value="ECO:0000318"/>
    <property type="project" value="GO_Central"/>
</dbReference>
<dbReference type="GO" id="GO:0003735">
    <property type="term" value="F:structural constituent of ribosome"/>
    <property type="evidence" value="ECO:0000266"/>
    <property type="project" value="RGD"/>
</dbReference>
<dbReference type="GO" id="GO:0002181">
    <property type="term" value="P:cytoplasmic translation"/>
    <property type="evidence" value="ECO:0000250"/>
    <property type="project" value="UniProtKB"/>
</dbReference>
<dbReference type="GO" id="GO:0097421">
    <property type="term" value="P:liver regeneration"/>
    <property type="evidence" value="ECO:0000270"/>
    <property type="project" value="RGD"/>
</dbReference>
<dbReference type="GO" id="GO:0140242">
    <property type="term" value="P:translation at postsynapse"/>
    <property type="evidence" value="ECO:0000303"/>
    <property type="project" value="SynGO"/>
</dbReference>
<dbReference type="GO" id="GO:0140236">
    <property type="term" value="P:translation at presynapse"/>
    <property type="evidence" value="ECO:0000303"/>
    <property type="project" value="SynGO"/>
</dbReference>
<dbReference type="FunFam" id="3.100.10.10:FF:000001">
    <property type="entry name" value="60S ribosomal protein L18"/>
    <property type="match status" value="1"/>
</dbReference>
<dbReference type="Gene3D" id="3.100.10.10">
    <property type="match status" value="1"/>
</dbReference>
<dbReference type="InterPro" id="IPR000039">
    <property type="entry name" value="Ribosomal_eL18"/>
</dbReference>
<dbReference type="InterPro" id="IPR021132">
    <property type="entry name" value="Ribosomal_eL18/eL18-A/B/_CS"/>
</dbReference>
<dbReference type="InterPro" id="IPR021131">
    <property type="entry name" value="Ribosomal_uL15/eL18"/>
</dbReference>
<dbReference type="InterPro" id="IPR036227">
    <property type="entry name" value="Ribosomal_uL15/eL18_sf"/>
</dbReference>
<dbReference type="PANTHER" id="PTHR10934">
    <property type="entry name" value="60S RIBOSOMAL PROTEIN L18"/>
    <property type="match status" value="1"/>
</dbReference>
<dbReference type="PANTHER" id="PTHR10934:SF2">
    <property type="entry name" value="LARGE RIBOSOMAL SUBUNIT PROTEIN EL18"/>
    <property type="match status" value="1"/>
</dbReference>
<dbReference type="Pfam" id="PF17135">
    <property type="entry name" value="Ribosomal_L18"/>
    <property type="match status" value="1"/>
</dbReference>
<dbReference type="SUPFAM" id="SSF52080">
    <property type="entry name" value="Ribosomal proteins L15p and L18e"/>
    <property type="match status" value="1"/>
</dbReference>
<dbReference type="PROSITE" id="PS01106">
    <property type="entry name" value="RIBOSOMAL_L18E"/>
    <property type="match status" value="1"/>
</dbReference>
<evidence type="ECO:0000250" key="1">
    <source>
        <dbReference type="UniProtKB" id="Q07020"/>
    </source>
</evidence>
<evidence type="ECO:0000250" key="2">
    <source>
        <dbReference type="UniProtKB" id="Q95342"/>
    </source>
</evidence>
<evidence type="ECO:0000256" key="3">
    <source>
        <dbReference type="SAM" id="MobiDB-lite"/>
    </source>
</evidence>
<evidence type="ECO:0000305" key="4"/>
<evidence type="ECO:0007744" key="5">
    <source>
    </source>
</evidence>
<proteinExistence type="evidence at protein level"/>
<gene>
    <name type="primary">Rpl18</name>
</gene>
<feature type="chain" id="PRO_0000132772" description="Large ribosomal subunit protein eL18">
    <location>
        <begin position="1"/>
        <end position="188"/>
    </location>
</feature>
<feature type="region of interest" description="Disordered" evidence="3">
    <location>
        <begin position="150"/>
        <end position="188"/>
    </location>
</feature>
<feature type="compositionally biased region" description="Basic residues" evidence="3">
    <location>
        <begin position="161"/>
        <end position="171"/>
    </location>
</feature>
<feature type="compositionally biased region" description="Basic residues" evidence="3">
    <location>
        <begin position="178"/>
        <end position="188"/>
    </location>
</feature>
<feature type="modified residue" description="Phosphoserine" evidence="5">
    <location>
        <position position="130"/>
    </location>
</feature>
<feature type="modified residue" description="Phosphothreonine" evidence="1">
    <location>
        <position position="158"/>
    </location>
</feature>
<feature type="cross-link" description="Glycyl lysine isopeptide (Lys-Gly) (interchain with G-Cter in SUMO2)" evidence="1">
    <location>
        <position position="119"/>
    </location>
</feature>
<feature type="cross-link" description="Glycyl lysine isopeptide (Lys-Gly) (interchain with G-Cter in SUMO2)" evidence="1">
    <location>
        <position position="164"/>
    </location>
</feature>
<comment type="function">
    <text evidence="1">Component of the large ribosomal subunit. The ribosome is a large ribonucleoprotein complex responsible for the synthesis of proteins in the cell.</text>
</comment>
<comment type="subunit">
    <text evidence="1">Component of the large ribosomal subunit.</text>
</comment>
<comment type="subcellular location">
    <subcellularLocation>
        <location evidence="1">Cytoplasm</location>
        <location evidence="1">Cytosol</location>
    </subcellularLocation>
    <subcellularLocation>
        <location evidence="1">Cytoplasm</location>
    </subcellularLocation>
    <subcellularLocation>
        <location evidence="2">Rough endoplasmic reticulum</location>
    </subcellularLocation>
    <text evidence="1 2">Detected on cytosolic polysomes (By similarity). Detected in ribosomes that are associated with the rough endoplasmic reticulum (By similarity).</text>
</comment>
<comment type="similarity">
    <text evidence="4">Belongs to the eukaryotic ribosomal protein eL18 family.</text>
</comment>
<name>RL18_RAT</name>
<keyword id="KW-0002">3D-structure</keyword>
<keyword id="KW-0963">Cytoplasm</keyword>
<keyword id="KW-0256">Endoplasmic reticulum</keyword>
<keyword id="KW-1017">Isopeptide bond</keyword>
<keyword id="KW-0597">Phosphoprotein</keyword>
<keyword id="KW-1185">Reference proteome</keyword>
<keyword id="KW-0687">Ribonucleoprotein</keyword>
<keyword id="KW-0689">Ribosomal protein</keyword>
<keyword id="KW-0832">Ubl conjugation</keyword>
<accession>P12001</accession>
<sequence>MGVDIRHNKDRKVRRKEPKSQDIYLRLLVKLYRFLARRTNSTFNQVVLKRLFMSRTNRPPLSLSRMIRKMKLPGRENKTAVVVGTITDDVRILEVPKLKVCALRVSSRARSRILKAGGKILTFDQLALESPKGRGTVLLSGPRKGREVYRHFGKAPGTPHSHTKPYVRSKGRKFERARGRRASRGYKN</sequence>
<reference key="1">
    <citation type="journal article" date="1988" name="DNA">
        <title>The primary structure of rat ribosomal protein L18.</title>
        <authorList>
            <person name="Devi K.R.G."/>
            <person name="Chan Y.-L."/>
            <person name="Wool I.G."/>
        </authorList>
    </citation>
    <scope>NUCLEOTIDE SEQUENCE [MRNA]</scope>
    <source>
        <strain>Sprague-Dawley</strain>
        <tissue>Liver</tissue>
    </source>
</reference>
<reference key="2">
    <citation type="journal article" date="2004" name="Genome Res.">
        <title>The status, quality, and expansion of the NIH full-length cDNA project: the Mammalian Gene Collection (MGC).</title>
        <authorList>
            <consortium name="The MGC Project Team"/>
        </authorList>
    </citation>
    <scope>NUCLEOTIDE SEQUENCE [LARGE SCALE MRNA]</scope>
    <source>
        <tissue>Ovary</tissue>
    </source>
</reference>
<reference key="3">
    <citation type="journal article" date="2012" name="Nat. Commun.">
        <title>Quantitative maps of protein phosphorylation sites across 14 different rat organs and tissues.</title>
        <authorList>
            <person name="Lundby A."/>
            <person name="Secher A."/>
            <person name="Lage K."/>
            <person name="Nordsborg N.B."/>
            <person name="Dmytriyev A."/>
            <person name="Lundby C."/>
            <person name="Olsen J.V."/>
        </authorList>
    </citation>
    <scope>PHOSPHORYLATION [LARGE SCALE ANALYSIS] AT SER-130</scope>
    <scope>IDENTIFICATION BY MASS SPECTROMETRY [LARGE SCALE ANALYSIS]</scope>
</reference>
<protein>
    <recommendedName>
        <fullName evidence="4">Large ribosomal subunit protein eL18</fullName>
    </recommendedName>
    <alternativeName>
        <fullName>60S ribosomal protein L18</fullName>
    </alternativeName>
</protein>